<protein>
    <recommendedName>
        <fullName evidence="1">Small ribosomal subunit protein uS4</fullName>
    </recommendedName>
    <alternativeName>
        <fullName evidence="3">30S ribosomal protein S4</fullName>
    </alternativeName>
</protein>
<dbReference type="EMBL" id="AP008937">
    <property type="protein sequence ID" value="BAG26823.1"/>
    <property type="molecule type" value="Genomic_DNA"/>
</dbReference>
<dbReference type="RefSeq" id="WP_003682773.1">
    <property type="nucleotide sequence ID" value="NC_010610.1"/>
</dbReference>
<dbReference type="SMR" id="B2GAZ1"/>
<dbReference type="GeneID" id="83715206"/>
<dbReference type="KEGG" id="lfe:LAF_0487"/>
<dbReference type="eggNOG" id="COG0522">
    <property type="taxonomic scope" value="Bacteria"/>
</dbReference>
<dbReference type="HOGENOM" id="CLU_092403_0_1_9"/>
<dbReference type="Proteomes" id="UP000001697">
    <property type="component" value="Chromosome"/>
</dbReference>
<dbReference type="GO" id="GO:0015935">
    <property type="term" value="C:small ribosomal subunit"/>
    <property type="evidence" value="ECO:0007669"/>
    <property type="project" value="InterPro"/>
</dbReference>
<dbReference type="GO" id="GO:0019843">
    <property type="term" value="F:rRNA binding"/>
    <property type="evidence" value="ECO:0007669"/>
    <property type="project" value="UniProtKB-UniRule"/>
</dbReference>
<dbReference type="GO" id="GO:0003735">
    <property type="term" value="F:structural constituent of ribosome"/>
    <property type="evidence" value="ECO:0007669"/>
    <property type="project" value="InterPro"/>
</dbReference>
<dbReference type="GO" id="GO:0042274">
    <property type="term" value="P:ribosomal small subunit biogenesis"/>
    <property type="evidence" value="ECO:0007669"/>
    <property type="project" value="TreeGrafter"/>
</dbReference>
<dbReference type="GO" id="GO:0006412">
    <property type="term" value="P:translation"/>
    <property type="evidence" value="ECO:0007669"/>
    <property type="project" value="UniProtKB-UniRule"/>
</dbReference>
<dbReference type="CDD" id="cd00165">
    <property type="entry name" value="S4"/>
    <property type="match status" value="1"/>
</dbReference>
<dbReference type="FunFam" id="1.10.1050.10:FF:000001">
    <property type="entry name" value="30S ribosomal protein S4"/>
    <property type="match status" value="1"/>
</dbReference>
<dbReference type="FunFam" id="3.10.290.10:FF:000001">
    <property type="entry name" value="30S ribosomal protein S4"/>
    <property type="match status" value="1"/>
</dbReference>
<dbReference type="Gene3D" id="1.10.1050.10">
    <property type="entry name" value="Ribosomal Protein S4 Delta 41, Chain A, domain 1"/>
    <property type="match status" value="1"/>
</dbReference>
<dbReference type="Gene3D" id="3.10.290.10">
    <property type="entry name" value="RNA-binding S4 domain"/>
    <property type="match status" value="1"/>
</dbReference>
<dbReference type="HAMAP" id="MF_01306_B">
    <property type="entry name" value="Ribosomal_uS4_B"/>
    <property type="match status" value="1"/>
</dbReference>
<dbReference type="InterPro" id="IPR022801">
    <property type="entry name" value="Ribosomal_uS4"/>
</dbReference>
<dbReference type="InterPro" id="IPR005709">
    <property type="entry name" value="Ribosomal_uS4_bac-type"/>
</dbReference>
<dbReference type="InterPro" id="IPR018079">
    <property type="entry name" value="Ribosomal_uS4_CS"/>
</dbReference>
<dbReference type="InterPro" id="IPR001912">
    <property type="entry name" value="Ribosomal_uS4_N"/>
</dbReference>
<dbReference type="InterPro" id="IPR002942">
    <property type="entry name" value="S4_RNA-bd"/>
</dbReference>
<dbReference type="InterPro" id="IPR036986">
    <property type="entry name" value="S4_RNA-bd_sf"/>
</dbReference>
<dbReference type="NCBIfam" id="NF003717">
    <property type="entry name" value="PRK05327.1"/>
    <property type="match status" value="1"/>
</dbReference>
<dbReference type="NCBIfam" id="TIGR01017">
    <property type="entry name" value="rpsD_bact"/>
    <property type="match status" value="1"/>
</dbReference>
<dbReference type="PANTHER" id="PTHR11831">
    <property type="entry name" value="30S 40S RIBOSOMAL PROTEIN"/>
    <property type="match status" value="1"/>
</dbReference>
<dbReference type="PANTHER" id="PTHR11831:SF4">
    <property type="entry name" value="SMALL RIBOSOMAL SUBUNIT PROTEIN US4M"/>
    <property type="match status" value="1"/>
</dbReference>
<dbReference type="Pfam" id="PF00163">
    <property type="entry name" value="Ribosomal_S4"/>
    <property type="match status" value="1"/>
</dbReference>
<dbReference type="Pfam" id="PF01479">
    <property type="entry name" value="S4"/>
    <property type="match status" value="1"/>
</dbReference>
<dbReference type="SMART" id="SM01390">
    <property type="entry name" value="Ribosomal_S4"/>
    <property type="match status" value="1"/>
</dbReference>
<dbReference type="SMART" id="SM00363">
    <property type="entry name" value="S4"/>
    <property type="match status" value="1"/>
</dbReference>
<dbReference type="SUPFAM" id="SSF55174">
    <property type="entry name" value="Alpha-L RNA-binding motif"/>
    <property type="match status" value="1"/>
</dbReference>
<dbReference type="PROSITE" id="PS00632">
    <property type="entry name" value="RIBOSOMAL_S4"/>
    <property type="match status" value="1"/>
</dbReference>
<dbReference type="PROSITE" id="PS50889">
    <property type="entry name" value="S4"/>
    <property type="match status" value="1"/>
</dbReference>
<name>RS4_LIMF3</name>
<accession>B2GAZ1</accession>
<organism>
    <name type="scientific">Limosilactobacillus fermentum (strain NBRC 3956 / LMG 18251)</name>
    <name type="common">Lactobacillus fermentum</name>
    <dbReference type="NCBI Taxonomy" id="334390"/>
    <lineage>
        <taxon>Bacteria</taxon>
        <taxon>Bacillati</taxon>
        <taxon>Bacillota</taxon>
        <taxon>Bacilli</taxon>
        <taxon>Lactobacillales</taxon>
        <taxon>Lactobacillaceae</taxon>
        <taxon>Limosilactobacillus</taxon>
    </lineage>
</organism>
<gene>
    <name evidence="1" type="primary">rpsD</name>
    <name type="ordered locus">LAF_0487</name>
</gene>
<proteinExistence type="inferred from homology"/>
<feature type="chain" id="PRO_1000140749" description="Small ribosomal subunit protein uS4">
    <location>
        <begin position="1"/>
        <end position="201"/>
    </location>
</feature>
<feature type="domain" description="S4 RNA-binding" evidence="1">
    <location>
        <begin position="93"/>
        <end position="153"/>
    </location>
</feature>
<feature type="region of interest" description="Disordered" evidence="2">
    <location>
        <begin position="22"/>
        <end position="47"/>
    </location>
</feature>
<evidence type="ECO:0000255" key="1">
    <source>
        <dbReference type="HAMAP-Rule" id="MF_01306"/>
    </source>
</evidence>
<evidence type="ECO:0000256" key="2">
    <source>
        <dbReference type="SAM" id="MobiDB-lite"/>
    </source>
</evidence>
<evidence type="ECO:0000305" key="3"/>
<sequence length="201" mass="22954">MSRYTGPSWRLSRRLGVSLSGTGKELARRPYAPGDHGNDRRGKLSEYGTQLREKQKLRFMYGMTERQFSNLFVRAGKIKEGTHGTNFMVLLERRLDNMVYRLGLATTRRQARQLVNHGHITVDGKRVDIPSYEVKVGQVIAVREKSKNLDVIKGAVEAVVARPAYVEFDADKLEGKLTRLPQREDMNADIDEALIVEFYNK</sequence>
<comment type="function">
    <text evidence="1">One of the primary rRNA binding proteins, it binds directly to 16S rRNA where it nucleates assembly of the body of the 30S subunit.</text>
</comment>
<comment type="function">
    <text evidence="1">With S5 and S12 plays an important role in translational accuracy.</text>
</comment>
<comment type="subunit">
    <text evidence="1">Part of the 30S ribosomal subunit. Contacts protein S5. The interaction surface between S4 and S5 is involved in control of translational fidelity.</text>
</comment>
<comment type="similarity">
    <text evidence="1">Belongs to the universal ribosomal protein uS4 family.</text>
</comment>
<reference key="1">
    <citation type="journal article" date="2008" name="DNA Res.">
        <title>Comparative genome analysis of Lactobacillus reuteri and Lactobacillus fermentum reveal a genomic island for reuterin and cobalamin production.</title>
        <authorList>
            <person name="Morita H."/>
            <person name="Toh H."/>
            <person name="Fukuda S."/>
            <person name="Horikawa H."/>
            <person name="Oshima K."/>
            <person name="Suzuki T."/>
            <person name="Murakami M."/>
            <person name="Hisamatsu S."/>
            <person name="Kato Y."/>
            <person name="Takizawa T."/>
            <person name="Fukuoka H."/>
            <person name="Yoshimura T."/>
            <person name="Itoh K."/>
            <person name="O'Sullivan D.J."/>
            <person name="McKay L.L."/>
            <person name="Ohno H."/>
            <person name="Kikuchi J."/>
            <person name="Masaoka T."/>
            <person name="Hattori M."/>
        </authorList>
    </citation>
    <scope>NUCLEOTIDE SEQUENCE [LARGE SCALE GENOMIC DNA]</scope>
    <source>
        <strain>NBRC 3956 / LMG 18251</strain>
    </source>
</reference>
<keyword id="KW-1185">Reference proteome</keyword>
<keyword id="KW-0687">Ribonucleoprotein</keyword>
<keyword id="KW-0689">Ribosomal protein</keyword>
<keyword id="KW-0694">RNA-binding</keyword>
<keyword id="KW-0699">rRNA-binding</keyword>